<evidence type="ECO:0000250" key="1">
    <source>
        <dbReference type="UniProtKB" id="C0HME0"/>
    </source>
</evidence>
<evidence type="ECO:0000256" key="2">
    <source>
        <dbReference type="SAM" id="MobiDB-lite"/>
    </source>
</evidence>
<evidence type="ECO:0000305" key="3"/>
<evidence type="ECO:0007744" key="4">
    <source>
    </source>
</evidence>
<name>CK096_MOUSE</name>
<organism>
    <name type="scientific">Mus musculus</name>
    <name type="common">Mouse</name>
    <dbReference type="NCBI Taxonomy" id="10090"/>
    <lineage>
        <taxon>Eukaryota</taxon>
        <taxon>Metazoa</taxon>
        <taxon>Chordata</taxon>
        <taxon>Craniata</taxon>
        <taxon>Vertebrata</taxon>
        <taxon>Euteleostomi</taxon>
        <taxon>Mammalia</taxon>
        <taxon>Eutheria</taxon>
        <taxon>Euarchontoglires</taxon>
        <taxon>Glires</taxon>
        <taxon>Rodentia</taxon>
        <taxon>Myomorpha</taxon>
        <taxon>Muroidea</taxon>
        <taxon>Muridae</taxon>
        <taxon>Murinae</taxon>
        <taxon>Mus</taxon>
        <taxon>Mus</taxon>
    </lineage>
</organism>
<comment type="subcellular location">
    <subcellularLocation>
        <location evidence="1">Cytoplasm</location>
    </subcellularLocation>
</comment>
<comment type="sequence caution" evidence="3">
    <conflict type="frameshift">
        <sequence resource="EMBL-CDS" id="BAE25380"/>
    </conflict>
</comment>
<reference key="1">
    <citation type="journal article" date="2009" name="PLoS Biol.">
        <title>Lineage-specific biology revealed by a finished genome assembly of the mouse.</title>
        <authorList>
            <person name="Church D.M."/>
            <person name="Goodstadt L."/>
            <person name="Hillier L.W."/>
            <person name="Zody M.C."/>
            <person name="Goldstein S."/>
            <person name="She X."/>
            <person name="Bult C.J."/>
            <person name="Agarwala R."/>
            <person name="Cherry J.L."/>
            <person name="DiCuccio M."/>
            <person name="Hlavina W."/>
            <person name="Kapustin Y."/>
            <person name="Meric P."/>
            <person name="Maglott D."/>
            <person name="Birtle Z."/>
            <person name="Marques A.C."/>
            <person name="Graves T."/>
            <person name="Zhou S."/>
            <person name="Teague B."/>
            <person name="Potamousis K."/>
            <person name="Churas C."/>
            <person name="Place M."/>
            <person name="Herschleb J."/>
            <person name="Runnheim R."/>
            <person name="Forrest D."/>
            <person name="Amos-Landgraf J."/>
            <person name="Schwartz D.C."/>
            <person name="Cheng Z."/>
            <person name="Lindblad-Toh K."/>
            <person name="Eichler E.E."/>
            <person name="Ponting C.P."/>
        </authorList>
    </citation>
    <scope>NUCLEOTIDE SEQUENCE [LARGE SCALE GENOMIC DNA]</scope>
    <source>
        <strain>C57BL/6J</strain>
    </source>
</reference>
<reference key="2">
    <citation type="journal article" date="2005" name="Science">
        <title>The transcriptional landscape of the mammalian genome.</title>
        <authorList>
            <person name="Carninci P."/>
            <person name="Kasukawa T."/>
            <person name="Katayama S."/>
            <person name="Gough J."/>
            <person name="Frith M.C."/>
            <person name="Maeda N."/>
            <person name="Oyama R."/>
            <person name="Ravasi T."/>
            <person name="Lenhard B."/>
            <person name="Wells C."/>
            <person name="Kodzius R."/>
            <person name="Shimokawa K."/>
            <person name="Bajic V.B."/>
            <person name="Brenner S.E."/>
            <person name="Batalov S."/>
            <person name="Forrest A.R."/>
            <person name="Zavolan M."/>
            <person name="Davis M.J."/>
            <person name="Wilming L.G."/>
            <person name="Aidinis V."/>
            <person name="Allen J.E."/>
            <person name="Ambesi-Impiombato A."/>
            <person name="Apweiler R."/>
            <person name="Aturaliya R.N."/>
            <person name="Bailey T.L."/>
            <person name="Bansal M."/>
            <person name="Baxter L."/>
            <person name="Beisel K.W."/>
            <person name="Bersano T."/>
            <person name="Bono H."/>
            <person name="Chalk A.M."/>
            <person name="Chiu K.P."/>
            <person name="Choudhary V."/>
            <person name="Christoffels A."/>
            <person name="Clutterbuck D.R."/>
            <person name="Crowe M.L."/>
            <person name="Dalla E."/>
            <person name="Dalrymple B.P."/>
            <person name="de Bono B."/>
            <person name="Della Gatta G."/>
            <person name="di Bernardo D."/>
            <person name="Down T."/>
            <person name="Engstrom P."/>
            <person name="Fagiolini M."/>
            <person name="Faulkner G."/>
            <person name="Fletcher C.F."/>
            <person name="Fukushima T."/>
            <person name="Furuno M."/>
            <person name="Futaki S."/>
            <person name="Gariboldi M."/>
            <person name="Georgii-Hemming P."/>
            <person name="Gingeras T.R."/>
            <person name="Gojobori T."/>
            <person name="Green R.E."/>
            <person name="Gustincich S."/>
            <person name="Harbers M."/>
            <person name="Hayashi Y."/>
            <person name="Hensch T.K."/>
            <person name="Hirokawa N."/>
            <person name="Hill D."/>
            <person name="Huminiecki L."/>
            <person name="Iacono M."/>
            <person name="Ikeo K."/>
            <person name="Iwama A."/>
            <person name="Ishikawa T."/>
            <person name="Jakt M."/>
            <person name="Kanapin A."/>
            <person name="Katoh M."/>
            <person name="Kawasawa Y."/>
            <person name="Kelso J."/>
            <person name="Kitamura H."/>
            <person name="Kitano H."/>
            <person name="Kollias G."/>
            <person name="Krishnan S.P."/>
            <person name="Kruger A."/>
            <person name="Kummerfeld S.K."/>
            <person name="Kurochkin I.V."/>
            <person name="Lareau L.F."/>
            <person name="Lazarevic D."/>
            <person name="Lipovich L."/>
            <person name="Liu J."/>
            <person name="Liuni S."/>
            <person name="McWilliam S."/>
            <person name="Madan Babu M."/>
            <person name="Madera M."/>
            <person name="Marchionni L."/>
            <person name="Matsuda H."/>
            <person name="Matsuzawa S."/>
            <person name="Miki H."/>
            <person name="Mignone F."/>
            <person name="Miyake S."/>
            <person name="Morris K."/>
            <person name="Mottagui-Tabar S."/>
            <person name="Mulder N."/>
            <person name="Nakano N."/>
            <person name="Nakauchi H."/>
            <person name="Ng P."/>
            <person name="Nilsson R."/>
            <person name="Nishiguchi S."/>
            <person name="Nishikawa S."/>
            <person name="Nori F."/>
            <person name="Ohara O."/>
            <person name="Okazaki Y."/>
            <person name="Orlando V."/>
            <person name="Pang K.C."/>
            <person name="Pavan W.J."/>
            <person name="Pavesi G."/>
            <person name="Pesole G."/>
            <person name="Petrovsky N."/>
            <person name="Piazza S."/>
            <person name="Reed J."/>
            <person name="Reid J.F."/>
            <person name="Ring B.Z."/>
            <person name="Ringwald M."/>
            <person name="Rost B."/>
            <person name="Ruan Y."/>
            <person name="Salzberg S.L."/>
            <person name="Sandelin A."/>
            <person name="Schneider C."/>
            <person name="Schoenbach C."/>
            <person name="Sekiguchi K."/>
            <person name="Semple C.A."/>
            <person name="Seno S."/>
            <person name="Sessa L."/>
            <person name="Sheng Y."/>
            <person name="Shibata Y."/>
            <person name="Shimada H."/>
            <person name="Shimada K."/>
            <person name="Silva D."/>
            <person name="Sinclair B."/>
            <person name="Sperling S."/>
            <person name="Stupka E."/>
            <person name="Sugiura K."/>
            <person name="Sultana R."/>
            <person name="Takenaka Y."/>
            <person name="Taki K."/>
            <person name="Tammoja K."/>
            <person name="Tan S.L."/>
            <person name="Tang S."/>
            <person name="Taylor M.S."/>
            <person name="Tegner J."/>
            <person name="Teichmann S.A."/>
            <person name="Ueda H.R."/>
            <person name="van Nimwegen E."/>
            <person name="Verardo R."/>
            <person name="Wei C.L."/>
            <person name="Yagi K."/>
            <person name="Yamanishi H."/>
            <person name="Zabarovsky E."/>
            <person name="Zhu S."/>
            <person name="Zimmer A."/>
            <person name="Hide W."/>
            <person name="Bult C."/>
            <person name="Grimmond S.M."/>
            <person name="Teasdale R.D."/>
            <person name="Liu E.T."/>
            <person name="Brusic V."/>
            <person name="Quackenbush J."/>
            <person name="Wahlestedt C."/>
            <person name="Mattick J.S."/>
            <person name="Hume D.A."/>
            <person name="Kai C."/>
            <person name="Sasaki D."/>
            <person name="Tomaru Y."/>
            <person name="Fukuda S."/>
            <person name="Kanamori-Katayama M."/>
            <person name="Suzuki M."/>
            <person name="Aoki J."/>
            <person name="Arakawa T."/>
            <person name="Iida J."/>
            <person name="Imamura K."/>
            <person name="Itoh M."/>
            <person name="Kato T."/>
            <person name="Kawaji H."/>
            <person name="Kawagashira N."/>
            <person name="Kawashima T."/>
            <person name="Kojima M."/>
            <person name="Kondo S."/>
            <person name="Konno H."/>
            <person name="Nakano K."/>
            <person name="Ninomiya N."/>
            <person name="Nishio T."/>
            <person name="Okada M."/>
            <person name="Plessy C."/>
            <person name="Shibata K."/>
            <person name="Shiraki T."/>
            <person name="Suzuki S."/>
            <person name="Tagami M."/>
            <person name="Waki K."/>
            <person name="Watahiki A."/>
            <person name="Okamura-Oho Y."/>
            <person name="Suzuki H."/>
            <person name="Kawai J."/>
            <person name="Hayashizaki Y."/>
        </authorList>
    </citation>
    <scope>NUCLEOTIDE SEQUENCE [LARGE SCALE MRNA] OF 27-246</scope>
    <source>
        <strain>C57BL/6J</strain>
        <tissue>Olfactory bulb</tissue>
    </source>
</reference>
<reference key="3">
    <citation type="journal article" date="2007" name="Proc. Natl. Acad. Sci. U.S.A.">
        <title>Large-scale phosphorylation analysis of mouse liver.</title>
        <authorList>
            <person name="Villen J."/>
            <person name="Beausoleil S.A."/>
            <person name="Gerber S.A."/>
            <person name="Gygi S.P."/>
        </authorList>
    </citation>
    <scope>IDENTIFICATION BY MASS SPECTROMETRY [LARGE SCALE ANALYSIS]</scope>
    <source>
        <tissue>Liver</tissue>
    </source>
</reference>
<reference key="4">
    <citation type="journal article" date="2010" name="Cell">
        <title>A tissue-specific atlas of mouse protein phosphorylation and expression.</title>
        <authorList>
            <person name="Huttlin E.L."/>
            <person name="Jedrychowski M.P."/>
            <person name="Elias J.E."/>
            <person name="Goswami T."/>
            <person name="Rad R."/>
            <person name="Beausoleil S.A."/>
            <person name="Villen J."/>
            <person name="Haas W."/>
            <person name="Sowa M.E."/>
            <person name="Gygi S.P."/>
        </authorList>
    </citation>
    <scope>PHOSPHORYLATION [LARGE SCALE ANALYSIS] AT THR-179; SER-196; SER-210 AND SER-220</scope>
    <scope>IDENTIFICATION BY MASS SPECTROMETRY [LARGE SCALE ANALYSIS]</scope>
    <source>
        <tissue>Brain</tissue>
        <tissue>Kidney</tissue>
        <tissue>Lung</tissue>
        <tissue>Spleen</tissue>
    </source>
</reference>
<sequence>MAFAVIRACSRVGRGGLYKRLGGPPRGTRRQRQRPRQGRQGASRSIAEQRSAAPRPPTGPPARYPSPAASARASEARRHPAADLDPPPGEPQAVASRGTPEPRPPPESPGAPPPPGSAPADGAMAAAKPGELMGICSSYQAVMPHFVCLTDEFPQPVRPAKLPKGKGRLRRPRQSRFKTQPVTFDEIQEVEEEGVSPMEEEKAKKSFLQSLECLRRSTQSLSLQREPLGSCKLRNSLDSSDSDSAL</sequence>
<feature type="chain" id="PRO_0000320642" description="Uncharacterized protein C11orf96 homolog">
    <location>
        <begin position="1"/>
        <end position="246"/>
    </location>
</feature>
<feature type="region of interest" description="Disordered" evidence="2">
    <location>
        <begin position="9"/>
        <end position="125"/>
    </location>
</feature>
<feature type="region of interest" description="Disordered" evidence="2">
    <location>
        <begin position="155"/>
        <end position="203"/>
    </location>
</feature>
<feature type="compositionally biased region" description="Basic residues" evidence="2">
    <location>
        <begin position="27"/>
        <end position="37"/>
    </location>
</feature>
<feature type="compositionally biased region" description="Pro residues" evidence="2">
    <location>
        <begin position="54"/>
        <end position="64"/>
    </location>
</feature>
<feature type="compositionally biased region" description="Pro residues" evidence="2">
    <location>
        <begin position="101"/>
        <end position="117"/>
    </location>
</feature>
<feature type="compositionally biased region" description="Basic residues" evidence="2">
    <location>
        <begin position="161"/>
        <end position="176"/>
    </location>
</feature>
<feature type="modified residue" description="Phosphothreonine" evidence="4">
    <location>
        <position position="179"/>
    </location>
</feature>
<feature type="modified residue" description="Phosphoserine" evidence="4">
    <location>
        <position position="196"/>
    </location>
</feature>
<feature type="modified residue" description="Phosphoserine" evidence="4">
    <location>
        <position position="210"/>
    </location>
</feature>
<feature type="modified residue" description="Phosphoserine" evidence="4">
    <location>
        <position position="220"/>
    </location>
</feature>
<gene>
    <name type="primary">Ag2</name>
    <name type="synonym">Gm13889</name>
</gene>
<keyword id="KW-0963">Cytoplasm</keyword>
<keyword id="KW-0597">Phosphoprotein</keyword>
<keyword id="KW-1185">Reference proteome</keyword>
<proteinExistence type="evidence at protein level"/>
<protein>
    <recommendedName>
        <fullName>Uncharacterized protein C11orf96 homolog</fullName>
    </recommendedName>
    <alternativeName>
        <fullName>Protein Ag2 homolog</fullName>
    </alternativeName>
</protein>
<dbReference type="EMBL" id="AL772372">
    <property type="status" value="NOT_ANNOTATED_CDS"/>
    <property type="molecule type" value="Genomic_DNA"/>
</dbReference>
<dbReference type="EMBL" id="AK143447">
    <property type="protein sequence ID" value="BAE25380.1"/>
    <property type="status" value="ALT_FRAME"/>
    <property type="molecule type" value="mRNA"/>
</dbReference>
<dbReference type="RefSeq" id="NP_001138506.1">
    <property type="nucleotide sequence ID" value="NM_001145034.1"/>
</dbReference>
<dbReference type="SMR" id="Q3UPL5"/>
<dbReference type="BioGRID" id="547808">
    <property type="interactions" value="1"/>
</dbReference>
<dbReference type="iPTMnet" id="Q3UPL5"/>
<dbReference type="PhosphoSitePlus" id="Q3UPL5"/>
<dbReference type="jPOST" id="Q3UPL5"/>
<dbReference type="PaxDb" id="10090-ENSMUSP00000140709"/>
<dbReference type="ProteomicsDB" id="279087"/>
<dbReference type="Antibodypedia" id="50640">
    <property type="antibodies" value="7 antibodies from 6 providers"/>
</dbReference>
<dbReference type="Ensembl" id="ENSMUST00000099689.5">
    <property type="protein sequence ID" value="ENSMUSP00000140709.2"/>
    <property type="gene ID" value="ENSMUSG00000087006.4"/>
</dbReference>
<dbReference type="GeneID" id="620695"/>
<dbReference type="KEGG" id="mmu:620695"/>
<dbReference type="AGR" id="MGI:3652053"/>
<dbReference type="MGI" id="MGI:3652053">
    <property type="gene designation" value="Gm13889"/>
</dbReference>
<dbReference type="VEuPathDB" id="HostDB:ENSMUSG00000087006"/>
<dbReference type="eggNOG" id="ENOG502S2E8">
    <property type="taxonomic scope" value="Eukaryota"/>
</dbReference>
<dbReference type="GeneTree" id="ENSGT00390000016821"/>
<dbReference type="HOGENOM" id="CLU_1245012_0_0_1"/>
<dbReference type="InParanoid" id="Q3UPL5"/>
<dbReference type="OMA" id="CITEEFP"/>
<dbReference type="OrthoDB" id="87261at9989"/>
<dbReference type="BioGRID-ORCS" id="620695">
    <property type="hits" value="1 hit in 58 CRISPR screens"/>
</dbReference>
<dbReference type="PRO" id="PR:Q3UPL5"/>
<dbReference type="Proteomes" id="UP000000589">
    <property type="component" value="Chromosome 2"/>
</dbReference>
<dbReference type="RNAct" id="Q3UPL5">
    <property type="molecule type" value="protein"/>
</dbReference>
<dbReference type="Bgee" id="ENSMUSG00000087006">
    <property type="expression patterns" value="Expressed in lumbar dorsal root ganglion and 136 other cell types or tissues"/>
</dbReference>
<dbReference type="ExpressionAtlas" id="A0A087WRN5">
    <property type="expression patterns" value="baseline and differential"/>
</dbReference>
<dbReference type="InterPro" id="IPR031521">
    <property type="entry name" value="DUF4695"/>
</dbReference>
<dbReference type="PANTHER" id="PTHR40250">
    <property type="entry name" value="CHROMOSOME 11 OPEN READING FRAME 96"/>
    <property type="match status" value="1"/>
</dbReference>
<dbReference type="PANTHER" id="PTHR40250:SF1">
    <property type="entry name" value="SI:CH1073-281M9.1"/>
    <property type="match status" value="1"/>
</dbReference>
<dbReference type="Pfam" id="PF15766">
    <property type="entry name" value="DUF4695"/>
    <property type="match status" value="1"/>
</dbReference>
<accession>Q3UPL5</accession>
<accession>A0A087WRN5</accession>